<protein>
    <recommendedName>
        <fullName evidence="1">Phosphomethylpyrimidine synthase</fullName>
        <ecNumber evidence="1">4.1.99.17</ecNumber>
    </recommendedName>
    <alternativeName>
        <fullName evidence="1">Hydroxymethylpyrimidine phosphate synthase</fullName>
        <shortName evidence="1">HMP-P synthase</shortName>
        <shortName evidence="1">HMP-phosphate synthase</shortName>
        <shortName evidence="1">HMPP synthase</shortName>
    </alternativeName>
    <alternativeName>
        <fullName evidence="1">Thiamine biosynthesis protein ThiC</fullName>
    </alternativeName>
</protein>
<proteinExistence type="inferred from homology"/>
<keyword id="KW-0004">4Fe-4S</keyword>
<keyword id="KW-0408">Iron</keyword>
<keyword id="KW-0411">Iron-sulfur</keyword>
<keyword id="KW-0456">Lyase</keyword>
<keyword id="KW-0479">Metal-binding</keyword>
<keyword id="KW-0949">S-adenosyl-L-methionine</keyword>
<keyword id="KW-0784">Thiamine biosynthesis</keyword>
<keyword id="KW-0862">Zinc</keyword>
<accession>A8FKN8</accession>
<dbReference type="EC" id="4.1.99.17" evidence="1"/>
<dbReference type="EMBL" id="CP000814">
    <property type="protein sequence ID" value="ABV52025.1"/>
    <property type="molecule type" value="Genomic_DNA"/>
</dbReference>
<dbReference type="RefSeq" id="WP_002866992.1">
    <property type="nucleotide sequence ID" value="NC_009839.1"/>
</dbReference>
<dbReference type="SMR" id="A8FKN8"/>
<dbReference type="KEGG" id="cju:C8J_0426"/>
<dbReference type="HOGENOM" id="CLU_013181_2_1_7"/>
<dbReference type="UniPathway" id="UPA00060"/>
<dbReference type="GO" id="GO:0005829">
    <property type="term" value="C:cytosol"/>
    <property type="evidence" value="ECO:0007669"/>
    <property type="project" value="TreeGrafter"/>
</dbReference>
<dbReference type="GO" id="GO:0051539">
    <property type="term" value="F:4 iron, 4 sulfur cluster binding"/>
    <property type="evidence" value="ECO:0007669"/>
    <property type="project" value="UniProtKB-KW"/>
</dbReference>
<dbReference type="GO" id="GO:0016830">
    <property type="term" value="F:carbon-carbon lyase activity"/>
    <property type="evidence" value="ECO:0007669"/>
    <property type="project" value="InterPro"/>
</dbReference>
<dbReference type="GO" id="GO:0008270">
    <property type="term" value="F:zinc ion binding"/>
    <property type="evidence" value="ECO:0007669"/>
    <property type="project" value="UniProtKB-UniRule"/>
</dbReference>
<dbReference type="GO" id="GO:0009228">
    <property type="term" value="P:thiamine biosynthetic process"/>
    <property type="evidence" value="ECO:0007669"/>
    <property type="project" value="UniProtKB-KW"/>
</dbReference>
<dbReference type="GO" id="GO:0009229">
    <property type="term" value="P:thiamine diphosphate biosynthetic process"/>
    <property type="evidence" value="ECO:0007669"/>
    <property type="project" value="UniProtKB-UniRule"/>
</dbReference>
<dbReference type="FunFam" id="3.20.20.540:FF:000001">
    <property type="entry name" value="Phosphomethylpyrimidine synthase"/>
    <property type="match status" value="1"/>
</dbReference>
<dbReference type="Gene3D" id="6.10.250.620">
    <property type="match status" value="1"/>
</dbReference>
<dbReference type="Gene3D" id="3.20.20.540">
    <property type="entry name" value="Radical SAM ThiC family, central domain"/>
    <property type="match status" value="1"/>
</dbReference>
<dbReference type="HAMAP" id="MF_00089">
    <property type="entry name" value="ThiC"/>
    <property type="match status" value="1"/>
</dbReference>
<dbReference type="InterPro" id="IPR037509">
    <property type="entry name" value="ThiC"/>
</dbReference>
<dbReference type="InterPro" id="IPR038521">
    <property type="entry name" value="ThiC/Bza_core_dom"/>
</dbReference>
<dbReference type="InterPro" id="IPR002817">
    <property type="entry name" value="ThiC/BzaA/B"/>
</dbReference>
<dbReference type="NCBIfam" id="NF009895">
    <property type="entry name" value="PRK13352.1"/>
    <property type="match status" value="1"/>
</dbReference>
<dbReference type="NCBIfam" id="TIGR00190">
    <property type="entry name" value="thiC"/>
    <property type="match status" value="1"/>
</dbReference>
<dbReference type="PANTHER" id="PTHR30557:SF1">
    <property type="entry name" value="PHOSPHOMETHYLPYRIMIDINE SYNTHASE, CHLOROPLASTIC"/>
    <property type="match status" value="1"/>
</dbReference>
<dbReference type="PANTHER" id="PTHR30557">
    <property type="entry name" value="THIAMINE BIOSYNTHESIS PROTEIN THIC"/>
    <property type="match status" value="1"/>
</dbReference>
<dbReference type="Pfam" id="PF01964">
    <property type="entry name" value="ThiC_Rad_SAM"/>
    <property type="match status" value="1"/>
</dbReference>
<dbReference type="SFLD" id="SFLDF00407">
    <property type="entry name" value="phosphomethylpyrimidine_syntha"/>
    <property type="match status" value="1"/>
</dbReference>
<dbReference type="SFLD" id="SFLDG01114">
    <property type="entry name" value="phosphomethylpyrimidine_syntha"/>
    <property type="match status" value="1"/>
</dbReference>
<dbReference type="SFLD" id="SFLDS00113">
    <property type="entry name" value="Radical_SAM_Phosphomethylpyrim"/>
    <property type="match status" value="1"/>
</dbReference>
<feature type="chain" id="PRO_1000071252" description="Phosphomethylpyrimidine synthase">
    <location>
        <begin position="1"/>
        <end position="430"/>
    </location>
</feature>
<feature type="binding site" evidence="1">
    <location>
        <position position="67"/>
    </location>
    <ligand>
        <name>substrate</name>
    </ligand>
</feature>
<feature type="binding site" evidence="1">
    <location>
        <position position="96"/>
    </location>
    <ligand>
        <name>substrate</name>
    </ligand>
</feature>
<feature type="binding site" evidence="1">
    <location>
        <position position="125"/>
    </location>
    <ligand>
        <name>substrate</name>
    </ligand>
</feature>
<feature type="binding site" evidence="1">
    <location>
        <position position="161"/>
    </location>
    <ligand>
        <name>substrate</name>
    </ligand>
</feature>
<feature type="binding site" evidence="1">
    <location>
        <begin position="183"/>
        <end position="185"/>
    </location>
    <ligand>
        <name>substrate</name>
    </ligand>
</feature>
<feature type="binding site" evidence="1">
    <location>
        <begin position="224"/>
        <end position="227"/>
    </location>
    <ligand>
        <name>substrate</name>
    </ligand>
</feature>
<feature type="binding site" evidence="1">
    <location>
        <position position="263"/>
    </location>
    <ligand>
        <name>substrate</name>
    </ligand>
</feature>
<feature type="binding site" evidence="1">
    <location>
        <position position="267"/>
    </location>
    <ligand>
        <name>Zn(2+)</name>
        <dbReference type="ChEBI" id="CHEBI:29105"/>
    </ligand>
</feature>
<feature type="binding site" evidence="1">
    <location>
        <position position="290"/>
    </location>
    <ligand>
        <name>substrate</name>
    </ligand>
</feature>
<feature type="binding site" evidence="1">
    <location>
        <position position="331"/>
    </location>
    <ligand>
        <name>Zn(2+)</name>
        <dbReference type="ChEBI" id="CHEBI:29105"/>
    </ligand>
</feature>
<feature type="binding site" evidence="1">
    <location>
        <position position="406"/>
    </location>
    <ligand>
        <name>[4Fe-4S] cluster</name>
        <dbReference type="ChEBI" id="CHEBI:49883"/>
        <note>4Fe-4S-S-AdoMet</note>
    </ligand>
</feature>
<feature type="binding site" evidence="1">
    <location>
        <position position="409"/>
    </location>
    <ligand>
        <name>[4Fe-4S] cluster</name>
        <dbReference type="ChEBI" id="CHEBI:49883"/>
        <note>4Fe-4S-S-AdoMet</note>
    </ligand>
</feature>
<feature type="binding site" evidence="1">
    <location>
        <position position="413"/>
    </location>
    <ligand>
        <name>[4Fe-4S] cluster</name>
        <dbReference type="ChEBI" id="CHEBI:49883"/>
        <note>4Fe-4S-S-AdoMet</note>
    </ligand>
</feature>
<name>THIC_CAMJ8</name>
<gene>
    <name evidence="1" type="primary">thiC</name>
    <name type="ordered locus">C8J_0426</name>
</gene>
<sequence length="430" mass="47526">MKTQMNYAKEGVFTKEMQIVAQKENLSKDFLLENIACGKIIIPANINHKSLDPNGIGFGLRTKVNVNLGVSNDCVDYSEEMKKVELAHKFDIEAIMDLSNYGKTSRFRDELVNVSKAMIGTVPVYDAVGFLEKDLKQIGAKDFLDVVYHHAKSGVDFMTIHAGINSRAAHIFKQSKRLTNIVSRGGSVLYAWMMMKDAENPFFEYYDDLLDICLKYDVTLSLGDALRPGSTHDASDGAQISELIELSLLTQRAWDVGVQVMIEGPGHMAINEIEVNMQLEKRLCKGAPFYVLGPLVTDIGAGYDHISGAIGGAVAAASGADMLCYVTPAEHLRLPNLEDVREGIVATKIAAHAGDIAKLPKERARDDEMSKARQEIDWEKMFKLAIDGEKAKKMFNERRPDDLNSCSMCGKMCAMNTMNQILKGEDVSLA</sequence>
<reference key="1">
    <citation type="journal article" date="2007" name="J. Bacteriol.">
        <title>The complete genome sequence of Campylobacter jejuni strain 81116 (NCTC11828).</title>
        <authorList>
            <person name="Pearson B.M."/>
            <person name="Gaskin D.J.H."/>
            <person name="Segers R.P.A.M."/>
            <person name="Wells J.M."/>
            <person name="Nuijten P.J.M."/>
            <person name="van Vliet A.H.M."/>
        </authorList>
    </citation>
    <scope>NUCLEOTIDE SEQUENCE [LARGE SCALE GENOMIC DNA]</scope>
    <source>
        <strain>81116 / NCTC 11828</strain>
    </source>
</reference>
<organism>
    <name type="scientific">Campylobacter jejuni subsp. jejuni serotype O:6 (strain 81116 / NCTC 11828)</name>
    <dbReference type="NCBI Taxonomy" id="407148"/>
    <lineage>
        <taxon>Bacteria</taxon>
        <taxon>Pseudomonadati</taxon>
        <taxon>Campylobacterota</taxon>
        <taxon>Epsilonproteobacteria</taxon>
        <taxon>Campylobacterales</taxon>
        <taxon>Campylobacteraceae</taxon>
        <taxon>Campylobacter</taxon>
    </lineage>
</organism>
<evidence type="ECO:0000255" key="1">
    <source>
        <dbReference type="HAMAP-Rule" id="MF_00089"/>
    </source>
</evidence>
<comment type="function">
    <text evidence="1">Catalyzes the synthesis of the hydroxymethylpyrimidine phosphate (HMP-P) moiety of thiamine from aminoimidazole ribotide (AIR) in a radical S-adenosyl-L-methionine (SAM)-dependent reaction.</text>
</comment>
<comment type="catalytic activity">
    <reaction evidence="1">
        <text>5-amino-1-(5-phospho-beta-D-ribosyl)imidazole + S-adenosyl-L-methionine = 4-amino-2-methyl-5-(phosphooxymethyl)pyrimidine + CO + 5'-deoxyadenosine + formate + L-methionine + 3 H(+)</text>
        <dbReference type="Rhea" id="RHEA:24840"/>
        <dbReference type="ChEBI" id="CHEBI:15378"/>
        <dbReference type="ChEBI" id="CHEBI:15740"/>
        <dbReference type="ChEBI" id="CHEBI:17245"/>
        <dbReference type="ChEBI" id="CHEBI:17319"/>
        <dbReference type="ChEBI" id="CHEBI:57844"/>
        <dbReference type="ChEBI" id="CHEBI:58354"/>
        <dbReference type="ChEBI" id="CHEBI:59789"/>
        <dbReference type="ChEBI" id="CHEBI:137981"/>
        <dbReference type="EC" id="4.1.99.17"/>
    </reaction>
</comment>
<comment type="cofactor">
    <cofactor evidence="1">
        <name>[4Fe-4S] cluster</name>
        <dbReference type="ChEBI" id="CHEBI:49883"/>
    </cofactor>
    <text evidence="1">Binds 1 [4Fe-4S] cluster per subunit. The cluster is coordinated with 3 cysteines and an exchangeable S-adenosyl-L-methionine.</text>
</comment>
<comment type="pathway">
    <text evidence="1">Cofactor biosynthesis; thiamine diphosphate biosynthesis.</text>
</comment>
<comment type="subunit">
    <text evidence="1">Homodimer.</text>
</comment>
<comment type="similarity">
    <text evidence="1">Belongs to the ThiC family.</text>
</comment>